<gene>
    <name evidence="1" type="primary">RAC1</name>
</gene>
<feature type="chain" id="PRO_0000198888" description="Ras-related C3 botulinum toxin substrate 1">
    <location>
        <begin position="1" status="less than"/>
        <end position="77" status="greater than"/>
    </location>
</feature>
<feature type="binding site" evidence="1">
    <location>
        <begin position="22"/>
        <end position="24"/>
    </location>
    <ligand>
        <name>GTP</name>
        <dbReference type="ChEBI" id="CHEBI:37565"/>
    </ligand>
</feature>
<feature type="binding site" evidence="1">
    <location>
        <begin position="65"/>
        <end position="66"/>
    </location>
    <ligand>
        <name>GTP</name>
        <dbReference type="ChEBI" id="CHEBI:37565"/>
    </ligand>
</feature>
<feature type="cross-link" description="Glycyl lysine isopeptide (Lys-Gly) (interchain with G-Cter in ubiquitin)" evidence="1">
    <location>
        <position position="53"/>
    </location>
</feature>
<feature type="non-terminal residue">
    <location>
        <position position="1"/>
    </location>
</feature>
<feature type="non-terminal residue">
    <location>
        <position position="77"/>
    </location>
</feature>
<protein>
    <recommendedName>
        <fullName evidence="1">Ras-related C3 botulinum toxin substrate 1</fullName>
        <ecNumber evidence="1">3.6.5.2</ecNumber>
    </recommendedName>
    <alternativeName>
        <fullName>Sigma 1 component protein p22</fullName>
    </alternativeName>
    <alternativeName>
        <fullName>p21-Rac1</fullName>
    </alternativeName>
</protein>
<organism>
    <name type="scientific">Cavia porcellus</name>
    <name type="common">Guinea pig</name>
    <dbReference type="NCBI Taxonomy" id="10141"/>
    <lineage>
        <taxon>Eukaryota</taxon>
        <taxon>Metazoa</taxon>
        <taxon>Chordata</taxon>
        <taxon>Craniata</taxon>
        <taxon>Vertebrata</taxon>
        <taxon>Euteleostomi</taxon>
        <taxon>Mammalia</taxon>
        <taxon>Eutheria</taxon>
        <taxon>Euarchontoglires</taxon>
        <taxon>Glires</taxon>
        <taxon>Rodentia</taxon>
        <taxon>Hystricomorpha</taxon>
        <taxon>Caviidae</taxon>
        <taxon>Cavia</taxon>
    </lineage>
</organism>
<accession>P80236</accession>
<accession>Q9QUV9</accession>
<name>RAC1_CAVPO</name>
<proteinExistence type="evidence at protein level"/>
<sequence>AKWYPEVRHHCPNTPIILVGTKLDLRDDKDTIEKLKEKKLTPITYPQGLAMAKEIGAVKYLECSALTQRTVFDEAIR</sequence>
<dbReference type="EC" id="3.6.5.2" evidence="1"/>
<dbReference type="PIR" id="S38767">
    <property type="entry name" value="S38767"/>
</dbReference>
<dbReference type="SMR" id="P80236"/>
<dbReference type="eggNOG" id="KOG0393">
    <property type="taxonomic scope" value="Eukaryota"/>
</dbReference>
<dbReference type="HOGENOM" id="CLU_041217_21_3_1"/>
<dbReference type="InParanoid" id="P80236"/>
<dbReference type="Proteomes" id="UP000005447">
    <property type="component" value="Unassembled WGS sequence"/>
</dbReference>
<dbReference type="GO" id="GO:0030425">
    <property type="term" value="C:dendrite"/>
    <property type="evidence" value="ECO:0007669"/>
    <property type="project" value="UniProtKB-SubCell"/>
</dbReference>
<dbReference type="GO" id="GO:0030027">
    <property type="term" value="C:lamellipodium"/>
    <property type="evidence" value="ECO:0000250"/>
    <property type="project" value="UniProtKB"/>
</dbReference>
<dbReference type="GO" id="GO:0042470">
    <property type="term" value="C:melanosome"/>
    <property type="evidence" value="ECO:0007669"/>
    <property type="project" value="UniProtKB-SubCell"/>
</dbReference>
<dbReference type="GO" id="GO:0016020">
    <property type="term" value="C:membrane"/>
    <property type="evidence" value="ECO:0007669"/>
    <property type="project" value="UniProtKB-SubCell"/>
</dbReference>
<dbReference type="GO" id="GO:0005634">
    <property type="term" value="C:nucleus"/>
    <property type="evidence" value="ECO:0000250"/>
    <property type="project" value="UniProtKB"/>
</dbReference>
<dbReference type="GO" id="GO:0045202">
    <property type="term" value="C:synapse"/>
    <property type="evidence" value="ECO:0007669"/>
    <property type="project" value="UniProtKB-SubCell"/>
</dbReference>
<dbReference type="GO" id="GO:0003925">
    <property type="term" value="F:G protein activity"/>
    <property type="evidence" value="ECO:0007669"/>
    <property type="project" value="UniProtKB-EC"/>
</dbReference>
<dbReference type="GO" id="GO:0005525">
    <property type="term" value="F:GTP binding"/>
    <property type="evidence" value="ECO:0000250"/>
    <property type="project" value="UniProtKB"/>
</dbReference>
<dbReference type="GO" id="GO:0007015">
    <property type="term" value="P:actin filament organization"/>
    <property type="evidence" value="ECO:0000250"/>
    <property type="project" value="UniProtKB"/>
</dbReference>
<dbReference type="GO" id="GO:0048870">
    <property type="term" value="P:cell motility"/>
    <property type="evidence" value="ECO:0000250"/>
    <property type="project" value="UniProtKB"/>
</dbReference>
<dbReference type="GO" id="GO:0001764">
    <property type="term" value="P:neuron migration"/>
    <property type="evidence" value="ECO:0000250"/>
    <property type="project" value="UniProtKB"/>
</dbReference>
<dbReference type="GO" id="GO:1903348">
    <property type="term" value="P:positive regulation of bicellular tight junction assembly"/>
    <property type="evidence" value="ECO:0000250"/>
    <property type="project" value="UniProtKB"/>
</dbReference>
<dbReference type="GO" id="GO:0001934">
    <property type="term" value="P:positive regulation of protein phosphorylation"/>
    <property type="evidence" value="ECO:0000250"/>
    <property type="project" value="UniProtKB"/>
</dbReference>
<dbReference type="GO" id="GO:0030334">
    <property type="term" value="P:regulation of cell migration"/>
    <property type="evidence" value="ECO:0000250"/>
    <property type="project" value="UniProtKB"/>
</dbReference>
<dbReference type="GO" id="GO:0007264">
    <property type="term" value="P:small GTPase-mediated signal transduction"/>
    <property type="evidence" value="ECO:0007669"/>
    <property type="project" value="InterPro"/>
</dbReference>
<dbReference type="Gene3D" id="3.40.50.300">
    <property type="entry name" value="P-loop containing nucleotide triphosphate hydrolases"/>
    <property type="match status" value="1"/>
</dbReference>
<dbReference type="InterPro" id="IPR027417">
    <property type="entry name" value="P-loop_NTPase"/>
</dbReference>
<dbReference type="InterPro" id="IPR001806">
    <property type="entry name" value="Small_GTPase"/>
</dbReference>
<dbReference type="InterPro" id="IPR003578">
    <property type="entry name" value="Small_GTPase_Rho"/>
</dbReference>
<dbReference type="PANTHER" id="PTHR24072">
    <property type="entry name" value="RHO FAMILY GTPASE"/>
    <property type="match status" value="1"/>
</dbReference>
<dbReference type="Pfam" id="PF00071">
    <property type="entry name" value="Ras"/>
    <property type="match status" value="1"/>
</dbReference>
<dbReference type="SMART" id="SM00174">
    <property type="entry name" value="RHO"/>
    <property type="match status" value="1"/>
</dbReference>
<dbReference type="SUPFAM" id="SSF52540">
    <property type="entry name" value="P-loop containing nucleoside triphosphate hydrolases"/>
    <property type="match status" value="1"/>
</dbReference>
<comment type="function">
    <text evidence="1 2 3">Plasma membrane-associated small GTPase which cycles between active GTP-bound and inactive GDP-bound states. In its active state, binds to a variety of effector proteins to regulate cellular responses such as secretory processes, phagocytosis of apoptotic cells, epithelial cell polarization, neurons adhesion, migration and differentiation, and growth-factor induced formation of membrane ruffles. Rac1 p21/rho GDI heterodimer is the active component of the cytosolic factor sigma 1, which is involved in stimulation of the NADPH oxidase activity in macrophages. Essential for the SPATA13-mediated regulation of cell migration and adhesion assembly and disassembly. Stimulates PKN2 kinase activity. In concert with RAB7A, plays a role in regulating the formation of RBs (ruffled borders) in osteoclasts. In podocytes, promotes nuclear shuttling of NR3C2; this modulation is required for a proper kidney functioning. Required for atypical chemokine receptor ACKR2-induced LIMK1-PAK1-dependent phosphorylation of cofilin (CFL1) and for up-regulation of ACKR2 from endosomal compartment to cell membrane, increasing its efficiency in chemokine uptake and degradation (By similarity). In neurons, is involved in dendritic spine formation and synaptic plasticity (By similarity). In hippocampal neurons, involved in spine morphogenesis and synapse formation, through local activation at synapses by guanine nucleotide exchange factors (GEFs), such as ARHGEF6/ARHGEF7/PIX (By similarity). In synapses, seems to mediate the regulation of F-actin cluster formation performed by SHANK3 (By similarity). In neurons, plays a crucial role in regulating GABA(A) receptor synaptic stability and hence GABAergic inhibitory synaptic transmission through its role in PAK1 activation and eventually F-actin stabilization (By similarity). Required for DSG3 translocation to cell-cell junctions, DSG3-mediated organization of cortical F-actin bundles and anchoring of actin at cell junctions; via interaction with DSG3 (By similarity). Subunit of the phagocyte NADPH oxidase complex that mediates the transfer of electrons from cytosolic NADPH to O2 to produce the superoxide anion (O2(-)) (By similarity).</text>
</comment>
<comment type="catalytic activity">
    <reaction evidence="1">
        <text>GTP + H2O = GDP + phosphate + H(+)</text>
        <dbReference type="Rhea" id="RHEA:19669"/>
        <dbReference type="ChEBI" id="CHEBI:15377"/>
        <dbReference type="ChEBI" id="CHEBI:15378"/>
        <dbReference type="ChEBI" id="CHEBI:37565"/>
        <dbReference type="ChEBI" id="CHEBI:43474"/>
        <dbReference type="ChEBI" id="CHEBI:58189"/>
        <dbReference type="EC" id="3.6.5.2"/>
    </reaction>
    <physiologicalReaction direction="left-to-right" evidence="1">
        <dbReference type="Rhea" id="RHEA:19670"/>
    </physiologicalReaction>
</comment>
<comment type="activity regulation">
    <text evidence="1">Regulated by guanine nucleotide exchange factors (GEFs) which promote the exchange of bound GDP for free GTP, GTPase activating proteins (GAPs) which increase the GTP hydrolysis activity, and GDP dissociation inhibitors which inhibit the dissociation of the nucleotide from the GTPase. GTP hydrolysis is stimulated by ARHGAP30.</text>
</comment>
<comment type="subunit">
    <text evidence="1 2 3">Interacts with NISCH. Interacts with PIP5K1A. Interacts with the GTP-bound form of RAB7A. Interacts with SRGAP2. Interacts with CYFIP1/SRA-1. Interacts with PLXNB3. Interacts with ARHGDIA; the interaction is induced by SEMA5A, mediated through PLXNB3 and inactivates and stabilizes RAC1. Interacts (GTP-bound form preferentially) with PKN2 (via the REM repeats); the interaction stimulates autophosphorylation and phosphorylation of PKN2. Interacts with the GEF proteins PREX1, RASGRF2, FARP1, FARP2, DOCK1, DOCK2 and DOCK7, which promote the exchange between GDP and GTP, and therefore activate it. Interacts with PARD6A, PARD6B and PARD6G in a GTP-dependent manner. Part of a quaternary complex containing PARD3, some PARD6 protein (PARD6A, PARD6B or PARD6G) and some atypical PKC protein (PRKCI or PRKCZ), which plays a central role in epithelial cell polarization. Found in a trimeric complex composed of DOCK1 and ELMO1, which plays a central role in phagocytosis of apoptotic cells. Interacts with RALBP1 via its effector domain. Interacts with PLXNB1. Part of a complex with MAP2K3, MAP3K3, CCM2 and DEF6. Interacts with BAIAP2, BAIAP2L1 and DEF6. Interacts with Y.pseudotuberculosis YPKA and PLCB2. Interacts with NOXA1. Interacts with ARHGEF2. Interacts with TBC1D2. Interacts with UNKL. Interacts with USP6. Interacts with SPATA13. Interacts with ARHGEF16; mediates activation of RAC1 by EPHA2. Interacts with ITGB4. Interacts with S100A8 and calprotectin (S100A8/9). Interacts with PACSIN2. Interacts (when active) with PPP5C (via TPR repeats); activates PPP5C phosphatase activity and translocates PPP5C to the cell membrane. Interacts with RAPH1 (via Ras associating and PH domains). Interacts with MTSS2 (via IMD domain); this interaction may be important to potentiate PDGF-induced RAC1 activation. Interacts with PAK2. Interacts (GTP-bound form) with SH3RF1 and SH3RF3. Found in a complex with SH3RF1, MAPK8IP1/JIP1, MAP3K11/MLK3, MAP2K7/MKK7 and MAPK8/JNK1. Interacts (both active GTP- or inactive GDP-bound forms) with SH3RF2. Interacts (GTP-bound form preferentially) with CYRIB (By similarity). Interacts with DOCK4 (via DOCKER domain); functions as a guanine nucleotide exchange factor (GEF) for RAC1 (By similarity). Interacts with GARRE1 (By similarity). Interacts with RAP1GDS1 (By similarity). May interact with ARHGAP36 (By similarity). Interacts with DSG3; the interaction is required for DSG3 translocation to cell-cell junctions, organization of cortical F-actin bundles and actin anchoring at cell-cell junctions (By similarity). Component of the phagocyte NADPH oxidase complex composed of an obligatory core heterodimer formed by the membrane proteins CYBA and CYBB and the cytosolic regulatory subunits NCF1/p47-phox, NCF2/p67-phox, NCF4/p40-phox and the small GTPase RAC1 or RAC2. Interacts with NCF2 (By similarity).</text>
</comment>
<comment type="subcellular location">
    <subcellularLocation>
        <location evidence="1">Cytoplasm</location>
    </subcellularLocation>
    <subcellularLocation>
        <location evidence="1">Membrane</location>
        <topology>Peripheral membrane protein</topology>
    </subcellularLocation>
    <subcellularLocation>
        <location evidence="1">Melanosome</location>
    </subcellularLocation>
    <subcellularLocation>
        <location evidence="2">Cell projection</location>
        <location evidence="2">Lamellipodium</location>
    </subcellularLocation>
    <subcellularLocation>
        <location evidence="2">Cell projection</location>
        <location evidence="2">Dendrite</location>
    </subcellularLocation>
    <subcellularLocation>
        <location evidence="3">Synapse</location>
    </subcellularLocation>
    <subcellularLocation>
        <location evidence="1">Nucleus</location>
    </subcellularLocation>
    <text evidence="1 2 3">Found in the ruffled border (a late endosomal-like compartment in the plasma membrane) of bone-resorbing osteoclasts. Localizes to the lamellipodium in a SH3RF1-dependent manner. In macrophages, cytoplasmic location increases upon CSF1 stimulation (By similarity). Activation by GTP-binding promotes nuclear localization (By similarity).</text>
</comment>
<comment type="domain">
    <text evidence="1">The effector region mediates interaction with DEF6.</text>
</comment>
<comment type="PTM">
    <text>The N-terminus is blocked.</text>
</comment>
<comment type="PTM">
    <text evidence="1">GTP-bound active form is ubiquitinated by HACE1, leading to its degradation by the proteasome.</text>
</comment>
<comment type="similarity">
    <text evidence="4">Belongs to the small GTPase superfamily. Rho family.</text>
</comment>
<reference key="1">
    <citation type="journal article" date="1991" name="Nature">
        <title>Activation of the NADPH oxidase involves the small GTP-binding protein p21rac1.</title>
        <authorList>
            <person name="Abo A."/>
            <person name="Pick E."/>
            <person name="Hall A."/>
            <person name="Totty N."/>
            <person name="Teahan C.G."/>
            <person name="Segal A.W."/>
        </authorList>
    </citation>
    <scope>PROTEIN SEQUENCE OF 1-69</scope>
</reference>
<reference key="2">
    <citation type="journal article" date="1993" name="Eur. J. Biochem.">
        <title>Role of the rac1 p21-GDP-dissociation inhibitor for rho heterodimer in the activation of the superoxide-forming NADPH oxidase of macrophages.</title>
        <authorList>
            <person name="Pick E."/>
            <person name="Gorzalczany Y."/>
            <person name="Engel S."/>
        </authorList>
    </citation>
    <scope>PROTEIN SEQUENCE OF 1-22; 39-53 AND 60-77</scope>
    <source>
        <strain>Hartley</strain>
        <tissue>Macrophage</tissue>
    </source>
</reference>
<keyword id="KW-0966">Cell projection</keyword>
<keyword id="KW-0963">Cytoplasm</keyword>
<keyword id="KW-0903">Direct protein sequencing</keyword>
<keyword id="KW-0342">GTP-binding</keyword>
<keyword id="KW-0378">Hydrolase</keyword>
<keyword id="KW-1017">Isopeptide bond</keyword>
<keyword id="KW-0472">Membrane</keyword>
<keyword id="KW-0547">Nucleotide-binding</keyword>
<keyword id="KW-0539">Nucleus</keyword>
<keyword id="KW-1185">Reference proteome</keyword>
<keyword id="KW-0770">Synapse</keyword>
<keyword id="KW-0832">Ubl conjugation</keyword>
<evidence type="ECO:0000250" key="1">
    <source>
        <dbReference type="UniProtKB" id="P63000"/>
    </source>
</evidence>
<evidence type="ECO:0000250" key="2">
    <source>
        <dbReference type="UniProtKB" id="P63001"/>
    </source>
</evidence>
<evidence type="ECO:0000250" key="3">
    <source>
        <dbReference type="UniProtKB" id="Q6RUV5"/>
    </source>
</evidence>
<evidence type="ECO:0000305" key="4"/>